<reference key="1">
    <citation type="journal article" date="2008" name="Chem. Biol. Interact.">
        <title>Extending the Bacillus cereus group genomics to putative food-borne pathogens of different toxicity.</title>
        <authorList>
            <person name="Lapidus A."/>
            <person name="Goltsman E."/>
            <person name="Auger S."/>
            <person name="Galleron N."/>
            <person name="Segurens B."/>
            <person name="Dossat C."/>
            <person name="Land M.L."/>
            <person name="Broussolle V."/>
            <person name="Brillard J."/>
            <person name="Guinebretiere M.-H."/>
            <person name="Sanchis V."/>
            <person name="Nguen-the C."/>
            <person name="Lereclus D."/>
            <person name="Richardson P."/>
            <person name="Wincker P."/>
            <person name="Weissenbach J."/>
            <person name="Ehrlich S.D."/>
            <person name="Sorokin A."/>
        </authorList>
    </citation>
    <scope>NUCLEOTIDE SEQUENCE [LARGE SCALE GENOMIC DNA]</scope>
    <source>
        <strain>KBAB4</strain>
    </source>
</reference>
<protein>
    <recommendedName>
        <fullName evidence="1">ATP synthase subunit beta</fullName>
        <ecNumber evidence="1">7.1.2.2</ecNumber>
    </recommendedName>
    <alternativeName>
        <fullName evidence="1">ATP synthase F1 sector subunit beta</fullName>
    </alternativeName>
    <alternativeName>
        <fullName evidence="1">F-ATPase subunit beta</fullName>
    </alternativeName>
</protein>
<feature type="chain" id="PRO_1000143477" description="ATP synthase subunit beta">
    <location>
        <begin position="1"/>
        <end position="469"/>
    </location>
</feature>
<feature type="binding site" evidence="1">
    <location>
        <begin position="156"/>
        <end position="163"/>
    </location>
    <ligand>
        <name>ATP</name>
        <dbReference type="ChEBI" id="CHEBI:30616"/>
    </ligand>
</feature>
<organism>
    <name type="scientific">Bacillus mycoides (strain KBAB4)</name>
    <name type="common">Bacillus weihenstephanensis</name>
    <dbReference type="NCBI Taxonomy" id="315730"/>
    <lineage>
        <taxon>Bacteria</taxon>
        <taxon>Bacillati</taxon>
        <taxon>Bacillota</taxon>
        <taxon>Bacilli</taxon>
        <taxon>Bacillales</taxon>
        <taxon>Bacillaceae</taxon>
        <taxon>Bacillus</taxon>
        <taxon>Bacillus cereus group</taxon>
    </lineage>
</organism>
<proteinExistence type="inferred from homology"/>
<keyword id="KW-0066">ATP synthesis</keyword>
<keyword id="KW-0067">ATP-binding</keyword>
<keyword id="KW-1003">Cell membrane</keyword>
<keyword id="KW-0139">CF(1)</keyword>
<keyword id="KW-0375">Hydrogen ion transport</keyword>
<keyword id="KW-0406">Ion transport</keyword>
<keyword id="KW-0472">Membrane</keyword>
<keyword id="KW-0547">Nucleotide-binding</keyword>
<keyword id="KW-1278">Translocase</keyword>
<keyword id="KW-0813">Transport</keyword>
<sequence length="469" mass="51124">MNKGRVTQIMGPVVDVKFDGGKLPEIYNALTVKQSNENGASINLTFEVALHLGDDTVRTVAMSSTDGLVRGTEVEDTGKAISVPVGDVTLGRVFNVLGDAIDLDGDVPADVRRDPIHRQAPAFEELSTKVEILETGIKVVDLLAPYIKGGKIGLFGGAGVGKTVLIQELINNIAQEHGGISVFAGVGERTREGNDLYHEMSDSGVIKKTAMVFGQMNEPPGARQRVALTGLTMAEHFRDEQGQDVLLFIDNIFRFTQAGSEVSALLGRMPSAVGYQPTLATEMGQLQERITSTNKGSITSIQAVYVPADDYTDPAPATTFAHLDATTNLERRLTQMGIYPAVDPLASTSRALSPEIVGEEHYEVARQVQQTLQRYKELQDIIAILGMDELSEEDKLVVHRARRIQFFLSQNFHVAEQFTGQKGSYVPVKNTVSGFKEILEGKYDDLPEDAFRLVGSIEEVIENAKKMMA</sequence>
<gene>
    <name evidence="1" type="primary">atpD</name>
    <name type="ordered locus">BcerKBAB4_5103</name>
</gene>
<comment type="function">
    <text evidence="1">Produces ATP from ADP in the presence of a proton gradient across the membrane. The catalytic sites are hosted primarily by the beta subunits.</text>
</comment>
<comment type="catalytic activity">
    <reaction evidence="1">
        <text>ATP + H2O + 4 H(+)(in) = ADP + phosphate + 5 H(+)(out)</text>
        <dbReference type="Rhea" id="RHEA:57720"/>
        <dbReference type="ChEBI" id="CHEBI:15377"/>
        <dbReference type="ChEBI" id="CHEBI:15378"/>
        <dbReference type="ChEBI" id="CHEBI:30616"/>
        <dbReference type="ChEBI" id="CHEBI:43474"/>
        <dbReference type="ChEBI" id="CHEBI:456216"/>
        <dbReference type="EC" id="7.1.2.2"/>
    </reaction>
</comment>
<comment type="subunit">
    <text evidence="1">F-type ATPases have 2 components, CF(1) - the catalytic core - and CF(0) - the membrane proton channel. CF(1) has five subunits: alpha(3), beta(3), gamma(1), delta(1), epsilon(1). CF(0) has three main subunits: a(1), b(2) and c(9-12). The alpha and beta chains form an alternating ring which encloses part of the gamma chain. CF(1) is attached to CF(0) by a central stalk formed by the gamma and epsilon chains, while a peripheral stalk is formed by the delta and b chains.</text>
</comment>
<comment type="subcellular location">
    <subcellularLocation>
        <location evidence="1">Cell membrane</location>
        <topology evidence="1">Peripheral membrane protein</topology>
    </subcellularLocation>
</comment>
<comment type="similarity">
    <text evidence="1">Belongs to the ATPase alpha/beta chains family.</text>
</comment>
<name>ATPB_BACMK</name>
<accession>A9VSA3</accession>
<evidence type="ECO:0000255" key="1">
    <source>
        <dbReference type="HAMAP-Rule" id="MF_01347"/>
    </source>
</evidence>
<dbReference type="EC" id="7.1.2.2" evidence="1"/>
<dbReference type="EMBL" id="CP000903">
    <property type="protein sequence ID" value="ABY46249.1"/>
    <property type="molecule type" value="Genomic_DNA"/>
</dbReference>
<dbReference type="RefSeq" id="WP_012262045.1">
    <property type="nucleotide sequence ID" value="NC_010184.1"/>
</dbReference>
<dbReference type="SMR" id="A9VSA3"/>
<dbReference type="KEGG" id="bwe:BcerKBAB4_5103"/>
<dbReference type="eggNOG" id="COG0055">
    <property type="taxonomic scope" value="Bacteria"/>
</dbReference>
<dbReference type="HOGENOM" id="CLU_022398_0_2_9"/>
<dbReference type="Proteomes" id="UP000002154">
    <property type="component" value="Chromosome"/>
</dbReference>
<dbReference type="GO" id="GO:0005886">
    <property type="term" value="C:plasma membrane"/>
    <property type="evidence" value="ECO:0007669"/>
    <property type="project" value="UniProtKB-SubCell"/>
</dbReference>
<dbReference type="GO" id="GO:0045259">
    <property type="term" value="C:proton-transporting ATP synthase complex"/>
    <property type="evidence" value="ECO:0007669"/>
    <property type="project" value="UniProtKB-KW"/>
</dbReference>
<dbReference type="GO" id="GO:0005524">
    <property type="term" value="F:ATP binding"/>
    <property type="evidence" value="ECO:0007669"/>
    <property type="project" value="UniProtKB-UniRule"/>
</dbReference>
<dbReference type="GO" id="GO:0016887">
    <property type="term" value="F:ATP hydrolysis activity"/>
    <property type="evidence" value="ECO:0007669"/>
    <property type="project" value="InterPro"/>
</dbReference>
<dbReference type="GO" id="GO:0046933">
    <property type="term" value="F:proton-transporting ATP synthase activity, rotational mechanism"/>
    <property type="evidence" value="ECO:0007669"/>
    <property type="project" value="UniProtKB-UniRule"/>
</dbReference>
<dbReference type="CDD" id="cd18110">
    <property type="entry name" value="ATP-synt_F1_beta_C"/>
    <property type="match status" value="1"/>
</dbReference>
<dbReference type="CDD" id="cd18115">
    <property type="entry name" value="ATP-synt_F1_beta_N"/>
    <property type="match status" value="1"/>
</dbReference>
<dbReference type="CDD" id="cd01133">
    <property type="entry name" value="F1-ATPase_beta_CD"/>
    <property type="match status" value="1"/>
</dbReference>
<dbReference type="FunFam" id="1.10.1140.10:FF:000001">
    <property type="entry name" value="ATP synthase subunit beta"/>
    <property type="match status" value="1"/>
</dbReference>
<dbReference type="FunFam" id="2.40.10.170:FF:000005">
    <property type="entry name" value="ATP synthase subunit beta"/>
    <property type="match status" value="1"/>
</dbReference>
<dbReference type="FunFam" id="3.40.50.300:FF:000004">
    <property type="entry name" value="ATP synthase subunit beta"/>
    <property type="match status" value="1"/>
</dbReference>
<dbReference type="Gene3D" id="2.40.10.170">
    <property type="match status" value="1"/>
</dbReference>
<dbReference type="Gene3D" id="1.10.1140.10">
    <property type="entry name" value="Bovine Mitochondrial F1-atpase, Atp Synthase Beta Chain, Chain D, domain 3"/>
    <property type="match status" value="1"/>
</dbReference>
<dbReference type="Gene3D" id="3.40.50.300">
    <property type="entry name" value="P-loop containing nucleotide triphosphate hydrolases"/>
    <property type="match status" value="1"/>
</dbReference>
<dbReference type="HAMAP" id="MF_01347">
    <property type="entry name" value="ATP_synth_beta_bact"/>
    <property type="match status" value="1"/>
</dbReference>
<dbReference type="InterPro" id="IPR003593">
    <property type="entry name" value="AAA+_ATPase"/>
</dbReference>
<dbReference type="InterPro" id="IPR055190">
    <property type="entry name" value="ATP-synt_VA_C"/>
</dbReference>
<dbReference type="InterPro" id="IPR005722">
    <property type="entry name" value="ATP_synth_F1_bsu"/>
</dbReference>
<dbReference type="InterPro" id="IPR020003">
    <property type="entry name" value="ATPase_a/bsu_AS"/>
</dbReference>
<dbReference type="InterPro" id="IPR050053">
    <property type="entry name" value="ATPase_alpha/beta_chains"/>
</dbReference>
<dbReference type="InterPro" id="IPR004100">
    <property type="entry name" value="ATPase_F1/V1/A1_a/bsu_N"/>
</dbReference>
<dbReference type="InterPro" id="IPR036121">
    <property type="entry name" value="ATPase_F1/V1/A1_a/bsu_N_sf"/>
</dbReference>
<dbReference type="InterPro" id="IPR000194">
    <property type="entry name" value="ATPase_F1/V1/A1_a/bsu_nucl-bd"/>
</dbReference>
<dbReference type="InterPro" id="IPR024034">
    <property type="entry name" value="ATPase_F1/V1_b/a_C"/>
</dbReference>
<dbReference type="InterPro" id="IPR027417">
    <property type="entry name" value="P-loop_NTPase"/>
</dbReference>
<dbReference type="NCBIfam" id="TIGR01039">
    <property type="entry name" value="atpD"/>
    <property type="match status" value="1"/>
</dbReference>
<dbReference type="PANTHER" id="PTHR15184">
    <property type="entry name" value="ATP SYNTHASE"/>
    <property type="match status" value="1"/>
</dbReference>
<dbReference type="PANTHER" id="PTHR15184:SF71">
    <property type="entry name" value="ATP SYNTHASE SUBUNIT BETA, MITOCHONDRIAL"/>
    <property type="match status" value="1"/>
</dbReference>
<dbReference type="Pfam" id="PF00006">
    <property type="entry name" value="ATP-synt_ab"/>
    <property type="match status" value="1"/>
</dbReference>
<dbReference type="Pfam" id="PF02874">
    <property type="entry name" value="ATP-synt_ab_N"/>
    <property type="match status" value="1"/>
</dbReference>
<dbReference type="Pfam" id="PF22919">
    <property type="entry name" value="ATP-synt_VA_C"/>
    <property type="match status" value="1"/>
</dbReference>
<dbReference type="SMART" id="SM00382">
    <property type="entry name" value="AAA"/>
    <property type="match status" value="1"/>
</dbReference>
<dbReference type="SUPFAM" id="SSF47917">
    <property type="entry name" value="C-terminal domain of alpha and beta subunits of F1 ATP synthase"/>
    <property type="match status" value="1"/>
</dbReference>
<dbReference type="SUPFAM" id="SSF50615">
    <property type="entry name" value="N-terminal domain of alpha and beta subunits of F1 ATP synthase"/>
    <property type="match status" value="1"/>
</dbReference>
<dbReference type="SUPFAM" id="SSF52540">
    <property type="entry name" value="P-loop containing nucleoside triphosphate hydrolases"/>
    <property type="match status" value="1"/>
</dbReference>
<dbReference type="PROSITE" id="PS00152">
    <property type="entry name" value="ATPASE_ALPHA_BETA"/>
    <property type="match status" value="1"/>
</dbReference>